<sequence length="122" mass="13401">MSRSLSSNGRVRRRKRILKLAKGFRGRCGTNYKAAKDAVSKALAHSYVARRDRKGSMRRLWISRINASVRTQGLSYSRFMNGLLQAGIALNRKVLSNMAIEDPGAFQTVIDASKKALGGGAC</sequence>
<gene>
    <name evidence="1" type="primary">rplT</name>
    <name type="ordered locus">TPASS_0848</name>
</gene>
<proteinExistence type="inferred from homology"/>
<evidence type="ECO:0000255" key="1">
    <source>
        <dbReference type="HAMAP-Rule" id="MF_00382"/>
    </source>
</evidence>
<evidence type="ECO:0000305" key="2"/>
<organism>
    <name type="scientific">Treponema pallidum subsp. pallidum (strain SS14)</name>
    <dbReference type="NCBI Taxonomy" id="455434"/>
    <lineage>
        <taxon>Bacteria</taxon>
        <taxon>Pseudomonadati</taxon>
        <taxon>Spirochaetota</taxon>
        <taxon>Spirochaetia</taxon>
        <taxon>Spirochaetales</taxon>
        <taxon>Treponemataceae</taxon>
        <taxon>Treponema</taxon>
    </lineage>
</organism>
<name>RL20_TREPS</name>
<dbReference type="EMBL" id="CP000805">
    <property type="protein sequence ID" value="ACD71265.1"/>
    <property type="molecule type" value="Genomic_DNA"/>
</dbReference>
<dbReference type="RefSeq" id="WP_010882292.1">
    <property type="nucleotide sequence ID" value="NC_021508.1"/>
</dbReference>
<dbReference type="SMR" id="B2S486"/>
<dbReference type="GeneID" id="93876606"/>
<dbReference type="KEGG" id="tpp:TPASS_0848"/>
<dbReference type="PATRIC" id="fig|455434.6.peg.837"/>
<dbReference type="Proteomes" id="UP000001202">
    <property type="component" value="Chromosome"/>
</dbReference>
<dbReference type="GO" id="GO:1990904">
    <property type="term" value="C:ribonucleoprotein complex"/>
    <property type="evidence" value="ECO:0007669"/>
    <property type="project" value="UniProtKB-KW"/>
</dbReference>
<dbReference type="GO" id="GO:0005840">
    <property type="term" value="C:ribosome"/>
    <property type="evidence" value="ECO:0007669"/>
    <property type="project" value="UniProtKB-KW"/>
</dbReference>
<dbReference type="GO" id="GO:0019843">
    <property type="term" value="F:rRNA binding"/>
    <property type="evidence" value="ECO:0007669"/>
    <property type="project" value="UniProtKB-UniRule"/>
</dbReference>
<dbReference type="GO" id="GO:0003735">
    <property type="term" value="F:structural constituent of ribosome"/>
    <property type="evidence" value="ECO:0007669"/>
    <property type="project" value="InterPro"/>
</dbReference>
<dbReference type="GO" id="GO:0000027">
    <property type="term" value="P:ribosomal large subunit assembly"/>
    <property type="evidence" value="ECO:0007669"/>
    <property type="project" value="UniProtKB-UniRule"/>
</dbReference>
<dbReference type="GO" id="GO:0006412">
    <property type="term" value="P:translation"/>
    <property type="evidence" value="ECO:0007669"/>
    <property type="project" value="InterPro"/>
</dbReference>
<dbReference type="CDD" id="cd07026">
    <property type="entry name" value="Ribosomal_L20"/>
    <property type="match status" value="1"/>
</dbReference>
<dbReference type="FunFam" id="1.10.1900.20:FF:000001">
    <property type="entry name" value="50S ribosomal protein L20"/>
    <property type="match status" value="1"/>
</dbReference>
<dbReference type="Gene3D" id="6.10.160.10">
    <property type="match status" value="1"/>
</dbReference>
<dbReference type="Gene3D" id="1.10.1900.20">
    <property type="entry name" value="Ribosomal protein L20"/>
    <property type="match status" value="1"/>
</dbReference>
<dbReference type="HAMAP" id="MF_00382">
    <property type="entry name" value="Ribosomal_bL20"/>
    <property type="match status" value="1"/>
</dbReference>
<dbReference type="InterPro" id="IPR005813">
    <property type="entry name" value="Ribosomal_bL20"/>
</dbReference>
<dbReference type="InterPro" id="IPR049946">
    <property type="entry name" value="RIBOSOMAL_L20_CS"/>
</dbReference>
<dbReference type="InterPro" id="IPR035566">
    <property type="entry name" value="Ribosomal_protein_bL20_C"/>
</dbReference>
<dbReference type="NCBIfam" id="TIGR01032">
    <property type="entry name" value="rplT_bact"/>
    <property type="match status" value="1"/>
</dbReference>
<dbReference type="PANTHER" id="PTHR10986">
    <property type="entry name" value="39S RIBOSOMAL PROTEIN L20"/>
    <property type="match status" value="1"/>
</dbReference>
<dbReference type="Pfam" id="PF00453">
    <property type="entry name" value="Ribosomal_L20"/>
    <property type="match status" value="1"/>
</dbReference>
<dbReference type="PRINTS" id="PR00062">
    <property type="entry name" value="RIBOSOMALL20"/>
</dbReference>
<dbReference type="SUPFAM" id="SSF74731">
    <property type="entry name" value="Ribosomal protein L20"/>
    <property type="match status" value="1"/>
</dbReference>
<dbReference type="PROSITE" id="PS00937">
    <property type="entry name" value="RIBOSOMAL_L20"/>
    <property type="match status" value="1"/>
</dbReference>
<accession>B2S486</accession>
<comment type="function">
    <text evidence="1">Binds directly to 23S ribosomal RNA and is necessary for the in vitro assembly process of the 50S ribosomal subunit. It is not involved in the protein synthesizing functions of that subunit.</text>
</comment>
<comment type="similarity">
    <text evidence="1">Belongs to the bacterial ribosomal protein bL20 family.</text>
</comment>
<reference key="1">
    <citation type="journal article" date="2008" name="BMC Microbiol.">
        <title>Complete genome sequence of Treponema pallidum ssp. pallidum strain SS14 determined with oligonucleotide arrays.</title>
        <authorList>
            <person name="Matejkova P."/>
            <person name="Strouhal M."/>
            <person name="Smajs D."/>
            <person name="Norris S.J."/>
            <person name="Palzkill T."/>
            <person name="Petrosino J.F."/>
            <person name="Sodergren E."/>
            <person name="Norton J.E."/>
            <person name="Singh J."/>
            <person name="Richmond T.A."/>
            <person name="Molla M.N."/>
            <person name="Albert T.J."/>
            <person name="Weinstock G.M."/>
        </authorList>
    </citation>
    <scope>NUCLEOTIDE SEQUENCE [LARGE SCALE GENOMIC DNA]</scope>
    <source>
        <strain>SS14</strain>
    </source>
</reference>
<protein>
    <recommendedName>
        <fullName evidence="1">Large ribosomal subunit protein bL20</fullName>
    </recommendedName>
    <alternativeName>
        <fullName evidence="2">50S ribosomal protein L20</fullName>
    </alternativeName>
</protein>
<feature type="chain" id="PRO_1000122388" description="Large ribosomal subunit protein bL20">
    <location>
        <begin position="1"/>
        <end position="122"/>
    </location>
</feature>
<keyword id="KW-0687">Ribonucleoprotein</keyword>
<keyword id="KW-0689">Ribosomal protein</keyword>
<keyword id="KW-0694">RNA-binding</keyword>
<keyword id="KW-0699">rRNA-binding</keyword>